<proteinExistence type="evidence at protein level"/>
<protein>
    <recommendedName>
        <fullName>Receptor-type tyrosine-protein phosphatase U</fullName>
        <shortName>R-PTP-U</shortName>
        <ecNumber>3.1.3.48</ecNumber>
    </recommendedName>
    <alternativeName>
        <fullName>Ftp-1</fullName>
    </alternativeName>
    <alternativeName>
        <fullName>Pancreatic carcinoma phosphatase 2</fullName>
        <shortName>PCP-2</shortName>
    </alternativeName>
    <alternativeName>
        <fullName>Protein-tyrosine phosphatase-lamda</fullName>
        <shortName>PTP-lambda</shortName>
        <shortName>PTPlambda</shortName>
    </alternativeName>
    <alternativeName>
        <fullName>Receptor-type protein-tyrosine phosphatase psi</fullName>
        <shortName>R-PTP-psi</shortName>
    </alternativeName>
</protein>
<dbReference type="EC" id="3.1.3.48"/>
<dbReference type="EMBL" id="D88187">
    <property type="protein sequence ID" value="BAA23475.1"/>
    <property type="molecule type" value="mRNA"/>
</dbReference>
<dbReference type="EMBL" id="U55057">
    <property type="protein sequence ID" value="AAB17895.1"/>
    <property type="molecule type" value="mRNA"/>
</dbReference>
<dbReference type="EMBL" id="AL670959">
    <property type="status" value="NOT_ANNOTATED_CDS"/>
    <property type="molecule type" value="Genomic_DNA"/>
</dbReference>
<dbReference type="EMBL" id="CH466552">
    <property type="protein sequence ID" value="EDL30128.1"/>
    <property type="molecule type" value="Genomic_DNA"/>
</dbReference>
<dbReference type="EMBL" id="AK052720">
    <property type="protein sequence ID" value="BAE43351.1"/>
    <property type="status" value="ALT_SEQ"/>
    <property type="molecule type" value="mRNA"/>
</dbReference>
<dbReference type="EMBL" id="BC080736">
    <property type="protein sequence ID" value="AAH80736.1"/>
    <property type="status" value="ALT_SEQ"/>
    <property type="molecule type" value="mRNA"/>
</dbReference>
<dbReference type="CCDS" id="CCDS18714.1">
    <molecule id="B1AUH1-2"/>
</dbReference>
<dbReference type="CCDS" id="CCDS38896.1">
    <molecule id="B1AUH1-1"/>
</dbReference>
<dbReference type="RefSeq" id="NP_001076588.1">
    <molecule id="B1AUH1-1"/>
    <property type="nucleotide sequence ID" value="NM_001083119.3"/>
</dbReference>
<dbReference type="RefSeq" id="NP_035344.2">
    <molecule id="B1AUH1-2"/>
    <property type="nucleotide sequence ID" value="NM_011214.3"/>
</dbReference>
<dbReference type="SMR" id="B1AUH1"/>
<dbReference type="BioGRID" id="202501">
    <property type="interactions" value="11"/>
</dbReference>
<dbReference type="FunCoup" id="B1AUH1">
    <property type="interactions" value="48"/>
</dbReference>
<dbReference type="STRING" id="10090.ENSMUSP00000030741"/>
<dbReference type="GlyConnect" id="2427">
    <molecule id="B1AUH1-2"/>
    <property type="glycosylation" value="2 N-Linked glycans (2 sites)"/>
</dbReference>
<dbReference type="GlyCosmos" id="B1AUH1">
    <property type="glycosylation" value="4 sites, 2 glycans"/>
</dbReference>
<dbReference type="GlyGen" id="B1AUH1">
    <property type="glycosylation" value="7 sites, 8 N-linked glycans (6 sites)"/>
</dbReference>
<dbReference type="iPTMnet" id="B1AUH1"/>
<dbReference type="PhosphoSitePlus" id="B1AUH1"/>
<dbReference type="PaxDb" id="10090-ENSMUSP00000030741"/>
<dbReference type="ProteomicsDB" id="301978">
    <molecule id="B1AUH1-1"/>
</dbReference>
<dbReference type="ProteomicsDB" id="301979">
    <molecule id="B1AUH1-2"/>
</dbReference>
<dbReference type="Antibodypedia" id="31032">
    <property type="antibodies" value="49 antibodies from 18 providers"/>
</dbReference>
<dbReference type="DNASU" id="19273"/>
<dbReference type="Ensembl" id="ENSMUST00000030741.9">
    <molecule id="B1AUH1-1"/>
    <property type="protein sequence ID" value="ENSMUSP00000030741.3"/>
    <property type="gene ID" value="ENSMUSG00000028909.18"/>
</dbReference>
<dbReference type="Ensembl" id="ENSMUST00000105987.9">
    <molecule id="B1AUH1-2"/>
    <property type="protein sequence ID" value="ENSMUSP00000101607.3"/>
    <property type="gene ID" value="ENSMUSG00000028909.18"/>
</dbReference>
<dbReference type="GeneID" id="19273"/>
<dbReference type="KEGG" id="mmu:19273"/>
<dbReference type="UCSC" id="uc008vaa.1">
    <molecule id="B1AUH1-1"/>
    <property type="organism name" value="mouse"/>
</dbReference>
<dbReference type="UCSC" id="uc008vab.1">
    <molecule id="B1AUH1-2"/>
    <property type="organism name" value="mouse"/>
</dbReference>
<dbReference type="AGR" id="MGI:1321151"/>
<dbReference type="CTD" id="10076"/>
<dbReference type="MGI" id="MGI:1321151">
    <property type="gene designation" value="Ptpru"/>
</dbReference>
<dbReference type="VEuPathDB" id="HostDB:ENSMUSG00000028909"/>
<dbReference type="eggNOG" id="KOG4228">
    <property type="taxonomic scope" value="Eukaryota"/>
</dbReference>
<dbReference type="GeneTree" id="ENSGT00940000157151"/>
<dbReference type="HOGENOM" id="CLU_001645_0_2_1"/>
<dbReference type="InParanoid" id="B1AUH1"/>
<dbReference type="OMA" id="WEQVRSH"/>
<dbReference type="OrthoDB" id="10253954at2759"/>
<dbReference type="PhylomeDB" id="B1AUH1"/>
<dbReference type="TreeFam" id="TF312900"/>
<dbReference type="Reactome" id="R-MMU-1433557">
    <property type="pathway name" value="Signaling by SCF-KIT"/>
</dbReference>
<dbReference type="BioGRID-ORCS" id="19273">
    <property type="hits" value="2 hits in 76 CRISPR screens"/>
</dbReference>
<dbReference type="ChiTaRS" id="Ptpru">
    <property type="organism name" value="mouse"/>
</dbReference>
<dbReference type="PRO" id="PR:B1AUH1"/>
<dbReference type="Proteomes" id="UP000000589">
    <property type="component" value="Chromosome 4"/>
</dbReference>
<dbReference type="RNAct" id="B1AUH1">
    <property type="molecule type" value="protein"/>
</dbReference>
<dbReference type="Bgee" id="ENSMUSG00000028909">
    <property type="expression patterns" value="Expressed in ventricular zone and 181 other cell types or tissues"/>
</dbReference>
<dbReference type="ExpressionAtlas" id="B1AUH1">
    <property type="expression patterns" value="baseline and differential"/>
</dbReference>
<dbReference type="GO" id="GO:0005911">
    <property type="term" value="C:cell-cell junction"/>
    <property type="evidence" value="ECO:0007669"/>
    <property type="project" value="Ensembl"/>
</dbReference>
<dbReference type="GO" id="GO:0005886">
    <property type="term" value="C:plasma membrane"/>
    <property type="evidence" value="ECO:0007669"/>
    <property type="project" value="UniProtKB-SubCell"/>
</dbReference>
<dbReference type="GO" id="GO:0008013">
    <property type="term" value="F:beta-catenin binding"/>
    <property type="evidence" value="ECO:0000353"/>
    <property type="project" value="MGI"/>
</dbReference>
<dbReference type="GO" id="GO:0004725">
    <property type="term" value="F:protein tyrosine phosphatase activity"/>
    <property type="evidence" value="ECO:0007669"/>
    <property type="project" value="UniProtKB-EC"/>
</dbReference>
<dbReference type="GO" id="GO:0031100">
    <property type="term" value="P:animal organ regeneration"/>
    <property type="evidence" value="ECO:0007669"/>
    <property type="project" value="Ensembl"/>
</dbReference>
<dbReference type="GO" id="GO:0030154">
    <property type="term" value="P:cell differentiation"/>
    <property type="evidence" value="ECO:0007669"/>
    <property type="project" value="UniProtKB-KW"/>
</dbReference>
<dbReference type="GO" id="GO:0034109">
    <property type="term" value="P:homotypic cell-cell adhesion"/>
    <property type="evidence" value="ECO:0000314"/>
    <property type="project" value="MGI"/>
</dbReference>
<dbReference type="GO" id="GO:0090090">
    <property type="term" value="P:negative regulation of canonical Wnt signaling pathway"/>
    <property type="evidence" value="ECO:0007669"/>
    <property type="project" value="Ensembl"/>
</dbReference>
<dbReference type="GO" id="GO:0030336">
    <property type="term" value="P:negative regulation of cell migration"/>
    <property type="evidence" value="ECO:0007669"/>
    <property type="project" value="Ensembl"/>
</dbReference>
<dbReference type="GO" id="GO:0008285">
    <property type="term" value="P:negative regulation of cell population proliferation"/>
    <property type="evidence" value="ECO:0007669"/>
    <property type="project" value="Ensembl"/>
</dbReference>
<dbReference type="GO" id="GO:2000049">
    <property type="term" value="P:positive regulation of cell-cell adhesion mediated by cadherin"/>
    <property type="evidence" value="ECO:0007669"/>
    <property type="project" value="Ensembl"/>
</dbReference>
<dbReference type="GO" id="GO:0034394">
    <property type="term" value="P:protein localization to cell surface"/>
    <property type="evidence" value="ECO:0007669"/>
    <property type="project" value="Ensembl"/>
</dbReference>
<dbReference type="GO" id="GO:0051384">
    <property type="term" value="P:response to glucocorticoid"/>
    <property type="evidence" value="ECO:0007669"/>
    <property type="project" value="Ensembl"/>
</dbReference>
<dbReference type="CDD" id="cd00063">
    <property type="entry name" value="FN3"/>
    <property type="match status" value="3"/>
</dbReference>
<dbReference type="CDD" id="cd06263">
    <property type="entry name" value="MAM"/>
    <property type="match status" value="1"/>
</dbReference>
<dbReference type="CDD" id="cd14632">
    <property type="entry name" value="R-PTPc-U-1"/>
    <property type="match status" value="1"/>
</dbReference>
<dbReference type="CDD" id="cd14637">
    <property type="entry name" value="R-PTPc-U-2"/>
    <property type="match status" value="1"/>
</dbReference>
<dbReference type="FunFam" id="2.60.40.10:FF:000019">
    <property type="entry name" value="receptor-type tyrosine-protein phosphatase kappa isoform X2"/>
    <property type="match status" value="1"/>
</dbReference>
<dbReference type="FunFam" id="2.60.40.10:FF:000009">
    <property type="entry name" value="receptor-type tyrosine-protein phosphatase U isoform X1"/>
    <property type="match status" value="1"/>
</dbReference>
<dbReference type="FunFam" id="2.60.40.10:FF:000048">
    <property type="entry name" value="receptor-type tyrosine-protein phosphatase U isoform X1"/>
    <property type="match status" value="1"/>
</dbReference>
<dbReference type="FunFam" id="3.90.190.10:FF:000019">
    <property type="entry name" value="receptor-type tyrosine-protein phosphatase U isoform X1"/>
    <property type="match status" value="1"/>
</dbReference>
<dbReference type="FunFam" id="2.60.120.200:FF:000022">
    <property type="entry name" value="receptor-type tyrosine-protein phosphatase U isoform X2"/>
    <property type="match status" value="1"/>
</dbReference>
<dbReference type="FunFam" id="2.60.40.10:FF:000025">
    <property type="entry name" value="receptor-type tyrosine-protein phosphatase U isoform X2"/>
    <property type="match status" value="1"/>
</dbReference>
<dbReference type="FunFam" id="3.90.190.10:FF:000014">
    <property type="entry name" value="receptor-type tyrosine-protein phosphatase U isoform X2"/>
    <property type="match status" value="1"/>
</dbReference>
<dbReference type="Gene3D" id="2.60.120.200">
    <property type="match status" value="1"/>
</dbReference>
<dbReference type="Gene3D" id="2.60.40.10">
    <property type="entry name" value="Immunoglobulins"/>
    <property type="match status" value="4"/>
</dbReference>
<dbReference type="Gene3D" id="3.90.190.10">
    <property type="entry name" value="Protein tyrosine phosphatase superfamily"/>
    <property type="match status" value="2"/>
</dbReference>
<dbReference type="InterPro" id="IPR013320">
    <property type="entry name" value="ConA-like_dom_sf"/>
</dbReference>
<dbReference type="InterPro" id="IPR003961">
    <property type="entry name" value="FN3_dom"/>
</dbReference>
<dbReference type="InterPro" id="IPR036116">
    <property type="entry name" value="FN3_sf"/>
</dbReference>
<dbReference type="InterPro" id="IPR036179">
    <property type="entry name" value="Ig-like_dom_sf"/>
</dbReference>
<dbReference type="InterPro" id="IPR013783">
    <property type="entry name" value="Ig-like_fold"/>
</dbReference>
<dbReference type="InterPro" id="IPR003599">
    <property type="entry name" value="Ig_sub"/>
</dbReference>
<dbReference type="InterPro" id="IPR000998">
    <property type="entry name" value="MAM_dom"/>
</dbReference>
<dbReference type="InterPro" id="IPR029021">
    <property type="entry name" value="Prot-tyrosine_phosphatase-like"/>
</dbReference>
<dbReference type="InterPro" id="IPR000242">
    <property type="entry name" value="PTP_cat"/>
</dbReference>
<dbReference type="InterPro" id="IPR051622">
    <property type="entry name" value="R-tyr_protein_phosphatases"/>
</dbReference>
<dbReference type="InterPro" id="IPR016130">
    <property type="entry name" value="Tyr_Pase_AS"/>
</dbReference>
<dbReference type="InterPro" id="IPR003595">
    <property type="entry name" value="Tyr_Pase_cat"/>
</dbReference>
<dbReference type="InterPro" id="IPR000387">
    <property type="entry name" value="Tyr_Pase_dom"/>
</dbReference>
<dbReference type="PANTHER" id="PTHR24051:SF10">
    <property type="entry name" value="RECEPTOR-TYPE TYROSINE-PROTEIN PHOSPHATASE U-RELATED"/>
    <property type="match status" value="1"/>
</dbReference>
<dbReference type="PANTHER" id="PTHR24051">
    <property type="entry name" value="SUSHI DOMAIN-CONTAINING PROTEIN 1"/>
    <property type="match status" value="1"/>
</dbReference>
<dbReference type="Pfam" id="PF00041">
    <property type="entry name" value="fn3"/>
    <property type="match status" value="1"/>
</dbReference>
<dbReference type="Pfam" id="PF23144">
    <property type="entry name" value="Fn3_PTPRU"/>
    <property type="match status" value="1"/>
</dbReference>
<dbReference type="Pfam" id="PF00629">
    <property type="entry name" value="MAM"/>
    <property type="match status" value="1"/>
</dbReference>
<dbReference type="Pfam" id="PF00102">
    <property type="entry name" value="Y_phosphatase"/>
    <property type="match status" value="2"/>
</dbReference>
<dbReference type="PRINTS" id="PR00020">
    <property type="entry name" value="MAMDOMAIN"/>
</dbReference>
<dbReference type="PRINTS" id="PR00700">
    <property type="entry name" value="PRTYPHPHTASE"/>
</dbReference>
<dbReference type="SMART" id="SM00060">
    <property type="entry name" value="FN3"/>
    <property type="match status" value="3"/>
</dbReference>
<dbReference type="SMART" id="SM00409">
    <property type="entry name" value="IG"/>
    <property type="match status" value="1"/>
</dbReference>
<dbReference type="SMART" id="SM00137">
    <property type="entry name" value="MAM"/>
    <property type="match status" value="1"/>
</dbReference>
<dbReference type="SMART" id="SM00194">
    <property type="entry name" value="PTPc"/>
    <property type="match status" value="2"/>
</dbReference>
<dbReference type="SMART" id="SM00404">
    <property type="entry name" value="PTPc_motif"/>
    <property type="match status" value="2"/>
</dbReference>
<dbReference type="SUPFAM" id="SSF52799">
    <property type="entry name" value="(Phosphotyrosine protein) phosphatases II"/>
    <property type="match status" value="2"/>
</dbReference>
<dbReference type="SUPFAM" id="SSF49899">
    <property type="entry name" value="Concanavalin A-like lectins/glucanases"/>
    <property type="match status" value="1"/>
</dbReference>
<dbReference type="SUPFAM" id="SSF49265">
    <property type="entry name" value="Fibronectin type III"/>
    <property type="match status" value="2"/>
</dbReference>
<dbReference type="SUPFAM" id="SSF48726">
    <property type="entry name" value="Immunoglobulin"/>
    <property type="match status" value="1"/>
</dbReference>
<dbReference type="PROSITE" id="PS50853">
    <property type="entry name" value="FN3"/>
    <property type="match status" value="3"/>
</dbReference>
<dbReference type="PROSITE" id="PS50060">
    <property type="entry name" value="MAM_2"/>
    <property type="match status" value="1"/>
</dbReference>
<dbReference type="PROSITE" id="PS00383">
    <property type="entry name" value="TYR_PHOSPHATASE_1"/>
    <property type="match status" value="2"/>
</dbReference>
<dbReference type="PROSITE" id="PS50056">
    <property type="entry name" value="TYR_PHOSPHATASE_2"/>
    <property type="match status" value="2"/>
</dbReference>
<dbReference type="PROSITE" id="PS50055">
    <property type="entry name" value="TYR_PHOSPHATASE_PTP"/>
    <property type="match status" value="2"/>
</dbReference>
<name>PTPRU_MOUSE</name>
<gene>
    <name type="primary">Ptpru</name>
    <name type="synonym">Pcp2</name>
    <name type="synonym">Ptpf</name>
</gene>
<organism>
    <name type="scientific">Mus musculus</name>
    <name type="common">Mouse</name>
    <dbReference type="NCBI Taxonomy" id="10090"/>
    <lineage>
        <taxon>Eukaryota</taxon>
        <taxon>Metazoa</taxon>
        <taxon>Chordata</taxon>
        <taxon>Craniata</taxon>
        <taxon>Vertebrata</taxon>
        <taxon>Euteleostomi</taxon>
        <taxon>Mammalia</taxon>
        <taxon>Eutheria</taxon>
        <taxon>Euarchontoglires</taxon>
        <taxon>Glires</taxon>
        <taxon>Rodentia</taxon>
        <taxon>Myomorpha</taxon>
        <taxon>Muroidea</taxon>
        <taxon>Muridae</taxon>
        <taxon>Murinae</taxon>
        <taxon>Mus</taxon>
        <taxon>Mus</taxon>
    </lineage>
</organism>
<evidence type="ECO:0000250" key="1"/>
<evidence type="ECO:0000250" key="2">
    <source>
        <dbReference type="UniProtKB" id="Q92729"/>
    </source>
</evidence>
<evidence type="ECO:0000255" key="3"/>
<evidence type="ECO:0000255" key="4">
    <source>
        <dbReference type="PROSITE-ProRule" id="PRU00128"/>
    </source>
</evidence>
<evidence type="ECO:0000255" key="5">
    <source>
        <dbReference type="PROSITE-ProRule" id="PRU00160"/>
    </source>
</evidence>
<evidence type="ECO:0000255" key="6">
    <source>
        <dbReference type="PROSITE-ProRule" id="PRU00316"/>
    </source>
</evidence>
<evidence type="ECO:0000255" key="7">
    <source>
        <dbReference type="PROSITE-ProRule" id="PRU10044"/>
    </source>
</evidence>
<evidence type="ECO:0000256" key="8">
    <source>
        <dbReference type="SAM" id="MobiDB-lite"/>
    </source>
</evidence>
<evidence type="ECO:0000269" key="9">
    <source>
    </source>
</evidence>
<evidence type="ECO:0000269" key="10">
    <source>
    </source>
</evidence>
<evidence type="ECO:0000269" key="11">
    <source>
    </source>
</evidence>
<evidence type="ECO:0000303" key="12">
    <source>
    </source>
</evidence>
<evidence type="ECO:0000303" key="13">
    <source>
    </source>
</evidence>
<evidence type="ECO:0000303" key="14">
    <source>
    </source>
</evidence>
<evidence type="ECO:0000303" key="15">
    <source>
    </source>
</evidence>
<evidence type="ECO:0000305" key="16"/>
<evidence type="ECO:0007744" key="17">
    <source>
    </source>
</evidence>
<sequence length="1446" mass="162494">MARAQALVLALTFQFCAPETETPAAGCTFEEASDPVVPCEFSQAQYDDFQWEQVRIHPGTRTPEDLPHGAYLMVNASQHAPGQRAHIIFQTLSENDTHCVQFSYFLYSRDGHSPGTLGVYVRVNGGPLGSAVWNMTGSHGRQWHQAELAVSTFWPNEYQVLFEALISPDHKGYIGLDDILLFSYPCAKAPHFSRLGDVEVNAGQNASFQCMAAGRAAEAEHFFLQRQSGVLVPAAGVRHISHRRFLATFPLASVGRSEQDLYRCVSQAPRGAGVSNFAELIVKEPPTPIAPPQLLRAGPTYLIIQLNTNSIIGDGPIVRKEIEYRMARGPWAEVHAVNLQTYKLWHLDPDTEYEISVLLTRPGDGGTGRPGPPLISRTKCAEPTRAPKGLAFAEIQARQLTLQWEPLGYNVTRCHTYAVSLCYRYTLGGSHNQTIRECVKMERGASRYTIKNLLPFRNIHVRLILTNPEGRKEGKEVTFQTDEDVPGGIAAESLTFTPLEDMIFLKWEEPQEPNGLITQYEISYQSIESSDPAVNVPGPRRTISKLRNETYHVFSNLHPGTTYLFSVRARTSKGFGQAALTEITTNISAPSFDYADMPSPLGESENTITVLLRPAQGRGAPISVYQVVVEEERPRRLRREPGAQDCFSVPLTFETALARGLVHYFGAELAASSLLEAMPFTVGDNQTYRGFWNPPLEPRKAYLIYFQAASHLKGETRLNCIRIARKAACKESKRPLEVSQRSEEMGLILGICAGGLAVLILLLGAIIVIIRKGRDRYAYSYYPKPVNMTKATVNYRQEKTHMMSAVDRSFTDQSTLQEDERLGLSFMDAPGYSPRGDQRSGGVTEASSLLGGSPRRPCGRKGSPYHTGQLHPAVRVADLLQHINQMKTAEGYGFKQEYESFFEGWDATKKKDKLKGGRQEPVSAYDRHHVKLHPMLADPDADYISANYIDGYHRSNHFIATQGPKPEMIYDFWRMVWQEQCASIVMITKLVEVGRVKCSRYWPEDSDMYGDIKITLVKTETLAEYVVRTFALERRGYSARHEVRQFHFTAWPEHGVPYHATGLLAFIRRVKASTPPDAGPIVIHCSAGTGRTGCYIVLDVMLDMAECEGVVDIYNCVKTLCSRRVNMIQTEEQYIFIHDAILEACLCGETTIPVNEFKATYREMIRIDPQSNSSQLREEFQTLNSVTPPLDVEECSIALLPRNRDKNRSMDVLPPDRCLPFLISSDGDPNNYINAALTDSYTRSAAFIVTLHPLQSTTPDFWRLVYDYGCTSIVMLNQLNQSNSAWPCLQYWPEPGRQQYGLMEVEFVSGTANEDLVSRVFRVQNSSRLQEGHLLVRHFQFLRWSAYRDTPDSRKAFLHLLAEVDKWQAESGDGRTVVHCLNGGGRSGTFCACATVLEMIRCHSLVDVFFAAKTLRNYKPNMVETMDQYHFCYDVALEYLEALELR</sequence>
<feature type="signal peptide" evidence="3">
    <location>
        <begin position="1"/>
        <end position="18"/>
    </location>
</feature>
<feature type="chain" id="PRO_0000371659" description="Receptor-type tyrosine-protein phosphatase U">
    <location>
        <begin position="19"/>
        <end position="1446"/>
    </location>
</feature>
<feature type="topological domain" description="Extracellular" evidence="3">
    <location>
        <begin position="19"/>
        <end position="749"/>
    </location>
</feature>
<feature type="transmembrane region" description="Helical" evidence="3">
    <location>
        <begin position="750"/>
        <end position="770"/>
    </location>
</feature>
<feature type="topological domain" description="Cytoplasmic" evidence="3">
    <location>
        <begin position="771"/>
        <end position="1446"/>
    </location>
</feature>
<feature type="domain" description="MAM" evidence="4">
    <location>
        <begin position="25"/>
        <end position="188"/>
    </location>
</feature>
<feature type="domain" description="Ig-like C2-type">
    <location>
        <begin position="190"/>
        <end position="275"/>
    </location>
</feature>
<feature type="domain" description="Fibronectin type-III 1" evidence="6">
    <location>
        <begin position="288"/>
        <end position="383"/>
    </location>
</feature>
<feature type="domain" description="Fibronectin type-III 2" evidence="6">
    <location>
        <begin position="386"/>
        <end position="484"/>
    </location>
</feature>
<feature type="domain" description="Fibronectin type-III 3" evidence="6">
    <location>
        <begin position="485"/>
        <end position="591"/>
    </location>
</feature>
<feature type="domain" description="Fibronectin type-III 4" evidence="6">
    <location>
        <begin position="592"/>
        <end position="668"/>
    </location>
</feature>
<feature type="domain" description="Tyrosine-protein phosphatase 1" evidence="5">
    <location>
        <begin position="888"/>
        <end position="1144"/>
    </location>
</feature>
<feature type="domain" description="Tyrosine-protein phosphatase 2" evidence="5">
    <location>
        <begin position="1176"/>
        <end position="1439"/>
    </location>
</feature>
<feature type="region of interest" description="Mediates interaction with CTNNB1" evidence="10">
    <location>
        <begin position="771"/>
        <end position="887"/>
    </location>
</feature>
<feature type="region of interest" description="Disordered" evidence="8">
    <location>
        <begin position="830"/>
        <end position="867"/>
    </location>
</feature>
<feature type="active site" description="Phosphocysteine intermediate" evidence="1">
    <location>
        <position position="1085"/>
    </location>
</feature>
<feature type="active site" description="Phosphocysteine intermediate" evidence="1">
    <location>
        <position position="1380"/>
    </location>
</feature>
<feature type="binding site" evidence="3">
    <location>
        <position position="1053"/>
    </location>
    <ligand>
        <name>substrate</name>
    </ligand>
</feature>
<feature type="binding site" evidence="1">
    <location>
        <begin position="1085"/>
        <end position="1091"/>
    </location>
    <ligand>
        <name>substrate</name>
    </ligand>
</feature>
<feature type="binding site" evidence="1">
    <location>
        <position position="1129"/>
    </location>
    <ligand>
        <name>substrate</name>
    </ligand>
</feature>
<feature type="modified residue" description="Phosphoserine" evidence="2">
    <location>
        <position position="848"/>
    </location>
</feature>
<feature type="modified residue" description="Phosphoserine" evidence="17">
    <location>
        <position position="853"/>
    </location>
</feature>
<feature type="modified residue" description="Phosphoserine" evidence="17">
    <location>
        <position position="863"/>
    </location>
</feature>
<feature type="modified residue" description="Phosphotyrosine" evidence="17">
    <location>
        <position position="865"/>
    </location>
</feature>
<feature type="glycosylation site" description="N-linked (GlcNAc...) asparagine" evidence="3">
    <location>
        <position position="75"/>
    </location>
</feature>
<feature type="glycosylation site" description="N-linked (GlcNAc...) asparagine" evidence="3">
    <location>
        <position position="410"/>
    </location>
</feature>
<feature type="glycosylation site" description="N-linked (GlcNAc...) asparagine" evidence="3">
    <location>
        <position position="685"/>
    </location>
</feature>
<feature type="disulfide bond" evidence="3">
    <location>
        <begin position="210"/>
        <end position="264"/>
    </location>
</feature>
<feature type="splice variant" id="VSP_037086" description="In isoform 2." evidence="12 13 14 15">
    <location>
        <begin position="774"/>
        <end position="783"/>
    </location>
</feature>
<feature type="sequence conflict" description="In Ref. 2; AAB17895." evidence="16" ref="2">
    <original>A</original>
    <variation>T</variation>
    <location>
        <position position="80"/>
    </location>
</feature>
<feature type="sequence conflict" description="In Ref. 2; AAB17895." evidence="16" ref="2">
    <original>Y</original>
    <variation>F</variation>
    <location>
        <position position="158"/>
    </location>
</feature>
<feature type="sequence conflict" description="In Ref. 6; AAH80736." evidence="16" ref="6">
    <original>V</original>
    <variation>A</variation>
    <location>
        <position position="265"/>
    </location>
</feature>
<feature type="sequence conflict" description="In Ref. 6; AAH80736." evidence="16" ref="6">
    <original>P</original>
    <variation>S</variation>
    <location>
        <position position="387"/>
    </location>
</feature>
<feature type="sequence conflict" description="In Ref. 6; AAH80736." evidence="16" ref="6">
    <original>K</original>
    <variation>R</variation>
    <location>
        <position position="506"/>
    </location>
</feature>
<feature type="sequence conflict" description="In Ref. 2; AAB17895." evidence="16" ref="2">
    <original>K</original>
    <variation>R</variation>
    <location>
        <position position="1158"/>
    </location>
</feature>
<comment type="function">
    <text evidence="1">Tyrosine-protein phosphatase which dephosphorylates CTNNB1. Regulates CTNNB1 function both in cell adhesion and signaling. May function in cell proliferation and migration and play a role in the maintenance of epithelial integrity. May play a role in megakaryocytopoiesis (By similarity).</text>
</comment>
<comment type="catalytic activity">
    <reaction evidence="7">
        <text>O-phospho-L-tyrosyl-[protein] + H2O = L-tyrosyl-[protein] + phosphate</text>
        <dbReference type="Rhea" id="RHEA:10684"/>
        <dbReference type="Rhea" id="RHEA-COMP:10136"/>
        <dbReference type="Rhea" id="RHEA-COMP:20101"/>
        <dbReference type="ChEBI" id="CHEBI:15377"/>
        <dbReference type="ChEBI" id="CHEBI:43474"/>
        <dbReference type="ChEBI" id="CHEBI:46858"/>
        <dbReference type="ChEBI" id="CHEBI:61978"/>
        <dbReference type="EC" id="3.1.3.48"/>
    </reaction>
</comment>
<comment type="subunit">
    <text evidence="1 16">Forms homooligomeric complexes which mediate cell homotypic adhesion (Probable). Interacts (via the cytoplasmic juxtamembrane domain) with CTNNB1; may mediate interaction with the cadherin/catenin adhesion complex. Interacts with KIT (By similarity). May interact with AP3B1 (By similarity).</text>
</comment>
<comment type="subcellular location">
    <subcellularLocation>
        <location evidence="1">Cell junction</location>
    </subcellularLocation>
    <subcellularLocation>
        <location evidence="1">Cell membrane</location>
        <topology evidence="1">Single-pass type I membrane protein</topology>
    </subcellularLocation>
</comment>
<comment type="alternative products">
    <event type="alternative splicing"/>
    <isoform>
        <id>B1AUH1-1</id>
        <name>1</name>
        <sequence type="displayed"/>
    </isoform>
    <isoform>
        <id>B1AUH1-2</id>
        <name>2</name>
        <sequence type="described" ref="VSP_037086"/>
    </isoform>
</comment>
<comment type="tissue specificity">
    <text evidence="9 10 11">Transcripts of different sizes are differentially expressed in a subset of tissues. Detected in brain, lung, skeletal muscle, heart, kidney and placenta. In brain; expressed in olfactory bulb, cerebral cortex, hippocampus and cerebellum.</text>
</comment>
<comment type="developmental stage">
    <text evidence="10">Expressed throughout embryonic development. First detected at 7 dpc.</text>
</comment>
<comment type="PTM">
    <text evidence="1">The extracellular domain is proteolytically processed through cleavage within the fibronectin type-III 4 domain. In addition to the 190 kDa full-length protein, proteolytic products of 100 kDa, 80 kDa and 73 kDa are observed (By similarity).</text>
</comment>
<comment type="PTM">
    <text evidence="1">N-glycosylated.</text>
</comment>
<comment type="PTM">
    <text evidence="1">Phosphorylated on tyrosine residues upon activation of KIT with stem cell factor (SCF). The 73 kDa proteolytic product is not phosphorylated (By similarity).</text>
</comment>
<comment type="similarity">
    <text evidence="16">Belongs to the protein-tyrosine phosphatase family. Receptor class 2B subfamily.</text>
</comment>
<comment type="sequence caution" evidence="16">
    <conflict type="erroneous termination">
        <sequence resource="EMBL-CDS" id="AAH80736"/>
    </conflict>
    <text>Truncated C-terminus.</text>
</comment>
<comment type="sequence caution" evidence="16">
    <conflict type="miscellaneous discrepancy">
        <sequence resource="EMBL-CDS" id="AAH80736"/>
    </conflict>
    <text>Contaminating sequence. Potential poly-A sequence.</text>
</comment>
<comment type="sequence caution" evidence="16">
    <conflict type="miscellaneous discrepancy">
        <sequence resource="EMBL-CDS" id="BAE43351"/>
    </conflict>
    <text>Intron retention.</text>
</comment>
<accession>B1AUH1</accession>
<accession>O35564</accession>
<accession>P70125</accession>
<accession>Q3V312</accession>
<accession>Q66JV9</accession>
<reference key="1">
    <citation type="journal article" date="1997" name="Gene">
        <title>Molecular cloning of a novel receptor-type protein tyrosine phosphatase from murine fetal liver.</title>
        <authorList>
            <person name="Yoneya T."/>
            <person name="Yamada Y."/>
            <person name="Kakeda M."/>
            <person name="Osawa M."/>
            <person name="Arai E."/>
            <person name="Hayashi K."/>
            <person name="Nishi N."/>
            <person name="Inoue H."/>
            <person name="Nishikawa M."/>
        </authorList>
    </citation>
    <scope>NUCLEOTIDE SEQUENCE [MRNA] (ISOFORM 2)</scope>
    <scope>TISSUE SPECIFICITY</scope>
    <source>
        <tissue>Fetal liver</tissue>
    </source>
</reference>
<reference key="2">
    <citation type="journal article" date="1997" name="J. Biol. Chem.">
        <title>A novel protein-tyrosine phosphatase related to the homotypically adhering kappa and mu receptors.</title>
        <authorList>
            <person name="Cheng J."/>
            <person name="Wu K."/>
            <person name="Armanini M."/>
            <person name="O'Rourke N."/>
            <person name="Dowbenko D."/>
            <person name="Lasky L.A."/>
        </authorList>
    </citation>
    <scope>NUCLEOTIDE SEQUENCE [MRNA] (ISOFORM 2)</scope>
    <scope>HOMOOLIGOMERIZATION</scope>
    <scope>INTERACTION WITH CTNNB1</scope>
    <scope>TISSUE SPECIFICITY</scope>
    <scope>DEVELOPMENTAL STAGE</scope>
    <scope>PROTEOLYTIC PROCESSING</scope>
    <source>
        <tissue>Lung</tissue>
    </source>
</reference>
<reference key="3">
    <citation type="journal article" date="2009" name="PLoS Biol.">
        <title>Lineage-specific biology revealed by a finished genome assembly of the mouse.</title>
        <authorList>
            <person name="Church D.M."/>
            <person name="Goodstadt L."/>
            <person name="Hillier L.W."/>
            <person name="Zody M.C."/>
            <person name="Goldstein S."/>
            <person name="She X."/>
            <person name="Bult C.J."/>
            <person name="Agarwala R."/>
            <person name="Cherry J.L."/>
            <person name="DiCuccio M."/>
            <person name="Hlavina W."/>
            <person name="Kapustin Y."/>
            <person name="Meric P."/>
            <person name="Maglott D."/>
            <person name="Birtle Z."/>
            <person name="Marques A.C."/>
            <person name="Graves T."/>
            <person name="Zhou S."/>
            <person name="Teague B."/>
            <person name="Potamousis K."/>
            <person name="Churas C."/>
            <person name="Place M."/>
            <person name="Herschleb J."/>
            <person name="Runnheim R."/>
            <person name="Forrest D."/>
            <person name="Amos-Landgraf J."/>
            <person name="Schwartz D.C."/>
            <person name="Cheng Z."/>
            <person name="Lindblad-Toh K."/>
            <person name="Eichler E.E."/>
            <person name="Ponting C.P."/>
        </authorList>
    </citation>
    <scope>NUCLEOTIDE SEQUENCE [LARGE SCALE GENOMIC DNA]</scope>
    <source>
        <strain>C57BL/6J</strain>
    </source>
</reference>
<reference key="4">
    <citation type="submission" date="2005-08" db="EMBL/GenBank/DDBJ databases">
        <authorList>
            <person name="Mural R.J."/>
            <person name="Adams M.D."/>
            <person name="Myers E.W."/>
            <person name="Smith H.O."/>
            <person name="Venter J.C."/>
        </authorList>
    </citation>
    <scope>NUCLEOTIDE SEQUENCE [LARGE SCALE GENOMIC DNA]</scope>
</reference>
<reference key="5">
    <citation type="journal article" date="2005" name="Science">
        <title>The transcriptional landscape of the mammalian genome.</title>
        <authorList>
            <person name="Carninci P."/>
            <person name="Kasukawa T."/>
            <person name="Katayama S."/>
            <person name="Gough J."/>
            <person name="Frith M.C."/>
            <person name="Maeda N."/>
            <person name="Oyama R."/>
            <person name="Ravasi T."/>
            <person name="Lenhard B."/>
            <person name="Wells C."/>
            <person name="Kodzius R."/>
            <person name="Shimokawa K."/>
            <person name="Bajic V.B."/>
            <person name="Brenner S.E."/>
            <person name="Batalov S."/>
            <person name="Forrest A.R."/>
            <person name="Zavolan M."/>
            <person name="Davis M.J."/>
            <person name="Wilming L.G."/>
            <person name="Aidinis V."/>
            <person name="Allen J.E."/>
            <person name="Ambesi-Impiombato A."/>
            <person name="Apweiler R."/>
            <person name="Aturaliya R.N."/>
            <person name="Bailey T.L."/>
            <person name="Bansal M."/>
            <person name="Baxter L."/>
            <person name="Beisel K.W."/>
            <person name="Bersano T."/>
            <person name="Bono H."/>
            <person name="Chalk A.M."/>
            <person name="Chiu K.P."/>
            <person name="Choudhary V."/>
            <person name="Christoffels A."/>
            <person name="Clutterbuck D.R."/>
            <person name="Crowe M.L."/>
            <person name="Dalla E."/>
            <person name="Dalrymple B.P."/>
            <person name="de Bono B."/>
            <person name="Della Gatta G."/>
            <person name="di Bernardo D."/>
            <person name="Down T."/>
            <person name="Engstrom P."/>
            <person name="Fagiolini M."/>
            <person name="Faulkner G."/>
            <person name="Fletcher C.F."/>
            <person name="Fukushima T."/>
            <person name="Furuno M."/>
            <person name="Futaki S."/>
            <person name="Gariboldi M."/>
            <person name="Georgii-Hemming P."/>
            <person name="Gingeras T.R."/>
            <person name="Gojobori T."/>
            <person name="Green R.E."/>
            <person name="Gustincich S."/>
            <person name="Harbers M."/>
            <person name="Hayashi Y."/>
            <person name="Hensch T.K."/>
            <person name="Hirokawa N."/>
            <person name="Hill D."/>
            <person name="Huminiecki L."/>
            <person name="Iacono M."/>
            <person name="Ikeo K."/>
            <person name="Iwama A."/>
            <person name="Ishikawa T."/>
            <person name="Jakt M."/>
            <person name="Kanapin A."/>
            <person name="Katoh M."/>
            <person name="Kawasawa Y."/>
            <person name="Kelso J."/>
            <person name="Kitamura H."/>
            <person name="Kitano H."/>
            <person name="Kollias G."/>
            <person name="Krishnan S.P."/>
            <person name="Kruger A."/>
            <person name="Kummerfeld S.K."/>
            <person name="Kurochkin I.V."/>
            <person name="Lareau L.F."/>
            <person name="Lazarevic D."/>
            <person name="Lipovich L."/>
            <person name="Liu J."/>
            <person name="Liuni S."/>
            <person name="McWilliam S."/>
            <person name="Madan Babu M."/>
            <person name="Madera M."/>
            <person name="Marchionni L."/>
            <person name="Matsuda H."/>
            <person name="Matsuzawa S."/>
            <person name="Miki H."/>
            <person name="Mignone F."/>
            <person name="Miyake S."/>
            <person name="Morris K."/>
            <person name="Mottagui-Tabar S."/>
            <person name="Mulder N."/>
            <person name="Nakano N."/>
            <person name="Nakauchi H."/>
            <person name="Ng P."/>
            <person name="Nilsson R."/>
            <person name="Nishiguchi S."/>
            <person name="Nishikawa S."/>
            <person name="Nori F."/>
            <person name="Ohara O."/>
            <person name="Okazaki Y."/>
            <person name="Orlando V."/>
            <person name="Pang K.C."/>
            <person name="Pavan W.J."/>
            <person name="Pavesi G."/>
            <person name="Pesole G."/>
            <person name="Petrovsky N."/>
            <person name="Piazza S."/>
            <person name="Reed J."/>
            <person name="Reid J.F."/>
            <person name="Ring B.Z."/>
            <person name="Ringwald M."/>
            <person name="Rost B."/>
            <person name="Ruan Y."/>
            <person name="Salzberg S.L."/>
            <person name="Sandelin A."/>
            <person name="Schneider C."/>
            <person name="Schoenbach C."/>
            <person name="Sekiguchi K."/>
            <person name="Semple C.A."/>
            <person name="Seno S."/>
            <person name="Sessa L."/>
            <person name="Sheng Y."/>
            <person name="Shibata Y."/>
            <person name="Shimada H."/>
            <person name="Shimada K."/>
            <person name="Silva D."/>
            <person name="Sinclair B."/>
            <person name="Sperling S."/>
            <person name="Stupka E."/>
            <person name="Sugiura K."/>
            <person name="Sultana R."/>
            <person name="Takenaka Y."/>
            <person name="Taki K."/>
            <person name="Tammoja K."/>
            <person name="Tan S.L."/>
            <person name="Tang S."/>
            <person name="Taylor M.S."/>
            <person name="Tegner J."/>
            <person name="Teichmann S.A."/>
            <person name="Ueda H.R."/>
            <person name="van Nimwegen E."/>
            <person name="Verardo R."/>
            <person name="Wei C.L."/>
            <person name="Yagi K."/>
            <person name="Yamanishi H."/>
            <person name="Zabarovsky E."/>
            <person name="Zhu S."/>
            <person name="Zimmer A."/>
            <person name="Hide W."/>
            <person name="Bult C."/>
            <person name="Grimmond S.M."/>
            <person name="Teasdale R.D."/>
            <person name="Liu E.T."/>
            <person name="Brusic V."/>
            <person name="Quackenbush J."/>
            <person name="Wahlestedt C."/>
            <person name="Mattick J.S."/>
            <person name="Hume D.A."/>
            <person name="Kai C."/>
            <person name="Sasaki D."/>
            <person name="Tomaru Y."/>
            <person name="Fukuda S."/>
            <person name="Kanamori-Katayama M."/>
            <person name="Suzuki M."/>
            <person name="Aoki J."/>
            <person name="Arakawa T."/>
            <person name="Iida J."/>
            <person name="Imamura K."/>
            <person name="Itoh M."/>
            <person name="Kato T."/>
            <person name="Kawaji H."/>
            <person name="Kawagashira N."/>
            <person name="Kawashima T."/>
            <person name="Kojima M."/>
            <person name="Kondo S."/>
            <person name="Konno H."/>
            <person name="Nakano K."/>
            <person name="Ninomiya N."/>
            <person name="Nishio T."/>
            <person name="Okada M."/>
            <person name="Plessy C."/>
            <person name="Shibata K."/>
            <person name="Shiraki T."/>
            <person name="Suzuki S."/>
            <person name="Tagami M."/>
            <person name="Waki K."/>
            <person name="Watahiki A."/>
            <person name="Okamura-Oho Y."/>
            <person name="Suzuki H."/>
            <person name="Kawai J."/>
            <person name="Hayashizaki Y."/>
        </authorList>
    </citation>
    <scope>NUCLEOTIDE SEQUENCE [LARGE SCALE MRNA] OF 1-1286 (ISOFORM 2)</scope>
    <source>
        <strain>C57BL/6J</strain>
        <tissue>Kidney</tissue>
    </source>
</reference>
<reference key="6">
    <citation type="journal article" date="2004" name="Genome Res.">
        <title>The status, quality, and expansion of the NIH full-length cDNA project: the Mammalian Gene Collection (MGC).</title>
        <authorList>
            <consortium name="The MGC Project Team"/>
        </authorList>
    </citation>
    <scope>NUCLEOTIDE SEQUENCE [LARGE SCALE MRNA] OF 1-911 (ISOFORM 2)</scope>
    <source>
        <strain>C57BL/6J</strain>
        <tissue>Embryo</tissue>
    </source>
</reference>
<reference key="7">
    <citation type="journal article" date="2004" name="BMC Genomics">
        <title>Genomic structure and alternative splicing of murine R2B receptor protein tyrosine phosphatases (PTPkappa, mu, rho and PCP-2).</title>
        <authorList>
            <person name="Besco J."/>
            <person name="Popesco M.C."/>
            <person name="Davuluri R.V."/>
            <person name="Frostholm A."/>
            <person name="Rotter A."/>
        </authorList>
    </citation>
    <scope>TISSUE SPECIFICITY</scope>
</reference>
<reference key="8">
    <citation type="journal article" date="2010" name="Cell">
        <title>A tissue-specific atlas of mouse protein phosphorylation and expression.</title>
        <authorList>
            <person name="Huttlin E.L."/>
            <person name="Jedrychowski M.P."/>
            <person name="Elias J.E."/>
            <person name="Goswami T."/>
            <person name="Rad R."/>
            <person name="Beausoleil S.A."/>
            <person name="Villen J."/>
            <person name="Haas W."/>
            <person name="Sowa M.E."/>
            <person name="Gygi S.P."/>
        </authorList>
    </citation>
    <scope>PHOSPHORYLATION [LARGE SCALE ANALYSIS] AT SER-853; SER-863 AND TYR-865</scope>
    <scope>IDENTIFICATION BY MASS SPECTROMETRY [LARGE SCALE ANALYSIS]</scope>
    <source>
        <tissue>Brain</tissue>
        <tissue>Kidney</tissue>
    </source>
</reference>
<keyword id="KW-0025">Alternative splicing</keyword>
<keyword id="KW-0130">Cell adhesion</keyword>
<keyword id="KW-0965">Cell junction</keyword>
<keyword id="KW-1003">Cell membrane</keyword>
<keyword id="KW-0221">Differentiation</keyword>
<keyword id="KW-1015">Disulfide bond</keyword>
<keyword id="KW-0325">Glycoprotein</keyword>
<keyword id="KW-0378">Hydrolase</keyword>
<keyword id="KW-0393">Immunoglobulin domain</keyword>
<keyword id="KW-0472">Membrane</keyword>
<keyword id="KW-0597">Phosphoprotein</keyword>
<keyword id="KW-0904">Protein phosphatase</keyword>
<keyword id="KW-0675">Receptor</keyword>
<keyword id="KW-1185">Reference proteome</keyword>
<keyword id="KW-0677">Repeat</keyword>
<keyword id="KW-0732">Signal</keyword>
<keyword id="KW-0812">Transmembrane</keyword>
<keyword id="KW-1133">Transmembrane helix</keyword>